<organismHost>
    <name type="scientific">Gallus gallus</name>
    <name type="common">Chicken</name>
    <dbReference type="NCBI Taxonomy" id="9031"/>
</organismHost>
<dbReference type="EMBL" id="X04719">
    <property type="protein sequence ID" value="CAA28426.1"/>
    <property type="molecule type" value="Genomic_RNA"/>
</dbReference>
<dbReference type="EMBL" id="M24697">
    <property type="protein sequence ID" value="AAA46648.1"/>
    <property type="molecule type" value="Genomic_RNA"/>
</dbReference>
<dbReference type="PIR" id="A27008">
    <property type="entry name" value="VGNZNV"/>
</dbReference>
<dbReference type="SMR" id="P06156"/>
<dbReference type="GlyCosmos" id="P06156">
    <property type="glycosylation" value="5 sites, No reported glycans"/>
</dbReference>
<dbReference type="GO" id="GO:0020002">
    <property type="term" value="C:host cell plasma membrane"/>
    <property type="evidence" value="ECO:0007669"/>
    <property type="project" value="UniProtKB-SubCell"/>
</dbReference>
<dbReference type="GO" id="GO:0016020">
    <property type="term" value="C:membrane"/>
    <property type="evidence" value="ECO:0007669"/>
    <property type="project" value="UniProtKB-KW"/>
</dbReference>
<dbReference type="GO" id="GO:0019031">
    <property type="term" value="C:viral envelope"/>
    <property type="evidence" value="ECO:0007669"/>
    <property type="project" value="UniProtKB-KW"/>
</dbReference>
<dbReference type="GO" id="GO:0055036">
    <property type="term" value="C:virion membrane"/>
    <property type="evidence" value="ECO:0007669"/>
    <property type="project" value="UniProtKB-SubCell"/>
</dbReference>
<dbReference type="GO" id="GO:0019064">
    <property type="term" value="P:fusion of virus membrane with host plasma membrane"/>
    <property type="evidence" value="ECO:0007669"/>
    <property type="project" value="UniProtKB-KW"/>
</dbReference>
<dbReference type="GO" id="GO:0046718">
    <property type="term" value="P:symbiont entry into host cell"/>
    <property type="evidence" value="ECO:0007669"/>
    <property type="project" value="UniProtKB-KW"/>
</dbReference>
<dbReference type="Gene3D" id="1.10.287.2480">
    <property type="match status" value="1"/>
</dbReference>
<dbReference type="Gene3D" id="6.10.10.110">
    <property type="match status" value="1"/>
</dbReference>
<dbReference type="Gene3D" id="2.60.40.1690">
    <property type="entry name" value="Head and neck region of the ectodomain of NDV fusion glycoprotein"/>
    <property type="match status" value="1"/>
</dbReference>
<dbReference type="Gene3D" id="2.40.490.10">
    <property type="entry name" value="Newcastle disease virus like domain"/>
    <property type="match status" value="1"/>
</dbReference>
<dbReference type="InterPro" id="IPR000776">
    <property type="entry name" value="Fusion_F0_Paramyxovir"/>
</dbReference>
<dbReference type="Pfam" id="PF00523">
    <property type="entry name" value="Fusion_gly"/>
    <property type="match status" value="1"/>
</dbReference>
<dbReference type="SUPFAM" id="SSF69922">
    <property type="entry name" value="Head and neck region of the ectodomain of NDV fusion glycoprotein"/>
    <property type="match status" value="1"/>
</dbReference>
<dbReference type="SUPFAM" id="SSF58069">
    <property type="entry name" value="Virus ectodomain"/>
    <property type="match status" value="1"/>
</dbReference>
<feature type="signal peptide" evidence="2">
    <location>
        <begin position="1"/>
        <end position="31"/>
    </location>
</feature>
<feature type="chain" id="PRO_0000039294" description="Fusion glycoprotein F0">
    <location>
        <begin position="32"/>
        <end position="553"/>
    </location>
</feature>
<feature type="chain" id="PRO_0000039295" description="Fusion glycoprotein F2">
    <location>
        <begin position="32"/>
        <end position="116"/>
    </location>
</feature>
<feature type="chain" id="PRO_0000039296" description="Fusion glycoprotein F1">
    <location>
        <begin position="117"/>
        <end position="553"/>
    </location>
</feature>
<feature type="topological domain" description="Extracellular" evidence="1">
    <location>
        <begin position="32"/>
        <end position="500"/>
    </location>
</feature>
<feature type="transmembrane region" description="Helical" evidence="1">
    <location>
        <begin position="501"/>
        <end position="521"/>
    </location>
</feature>
<feature type="topological domain" description="Cytoplasmic" evidence="1">
    <location>
        <begin position="522"/>
        <end position="553"/>
    </location>
</feature>
<feature type="region of interest" description="Fusion peptide" evidence="1">
    <location>
        <begin position="117"/>
        <end position="141"/>
    </location>
</feature>
<feature type="coiled-coil region" evidence="2">
    <location>
        <begin position="142"/>
        <end position="170"/>
    </location>
</feature>
<feature type="coiled-coil region" evidence="2">
    <location>
        <begin position="466"/>
        <end position="491"/>
    </location>
</feature>
<feature type="site" description="Cleavage; by host" evidence="1">
    <location>
        <begin position="116"/>
        <end position="117"/>
    </location>
</feature>
<feature type="lipid moiety-binding region" description="S-palmitoyl cysteine; by host" evidence="2">
    <location>
        <position position="523"/>
    </location>
</feature>
<feature type="glycosylation site" description="N-linked (GlcNAc...) asparagine; by host" evidence="2">
    <location>
        <position position="85"/>
    </location>
</feature>
<feature type="glycosylation site" description="N-linked (GlcNAc...) asparagine; by host" evidence="2">
    <location>
        <position position="191"/>
    </location>
</feature>
<feature type="glycosylation site" description="N-linked (GlcNAc...) asparagine; by host" evidence="2">
    <location>
        <position position="366"/>
    </location>
</feature>
<feature type="glycosylation site" description="N-linked (GlcNAc...) asparagine; by host" evidence="2">
    <location>
        <position position="447"/>
    </location>
</feature>
<feature type="glycosylation site" description="N-linked (GlcNAc...) asparagine; by host" evidence="2">
    <location>
        <position position="471"/>
    </location>
</feature>
<feature type="disulfide bond" description="Interchain (between F2 and F1 chains)" evidence="1">
    <location>
        <begin position="76"/>
        <end position="199"/>
    </location>
</feature>
<feature type="disulfide bond" evidence="1">
    <location>
        <begin position="338"/>
        <end position="347"/>
    </location>
</feature>
<feature type="disulfide bond" evidence="1">
    <location>
        <begin position="362"/>
        <end position="370"/>
    </location>
</feature>
<feature type="disulfide bond" evidence="1">
    <location>
        <begin position="394"/>
        <end position="399"/>
    </location>
</feature>
<feature type="disulfide bond" evidence="1">
    <location>
        <begin position="401"/>
        <end position="424"/>
    </location>
</feature>
<gene>
    <name type="primary">F</name>
</gene>
<comment type="function">
    <text evidence="1">Class I viral fusion protein. Under the current model, the protein has at least 3 conformational states: pre-fusion native state, pre-hairpin intermediate state, and post-fusion hairpin state. During viral and plasma cell membrane fusion, the heptad repeat (HR) regions assume a trimer-of-hairpins structure, positioning the fusion peptide in close proximity to the C-terminal region of the ectodomain. The formation of this structure appears to drive apposition and subsequent fusion of viral and plasma cell membranes. Directs fusion of viral and cellular membranes leading to delivery of the nucleocapsid into the cytoplasm. This fusion is pH independent and occurs directly at the outer cell membrane. The trimer of F1-F2 (F protein) probably interacts with HN at the virion surface. Upon HN binding to its cellular receptor, the hydrophobic fusion peptide is unmasked and interacts with the cellular membrane, inducing the fusion between cell and virion membranes. Later in infection, F proteins expressed at the plasma membrane of infected cells could mediate fusion with adjacent cells to form syncytia, a cytopathic effect that could lead to tissue necrosis (By similarity).</text>
</comment>
<comment type="subunit">
    <text evidence="1">Homotrimer of disulfide-linked F1-F2.</text>
</comment>
<comment type="subcellular location">
    <subcellularLocation>
        <location evidence="1">Virion membrane</location>
        <topology evidence="1">Single-pass type I membrane protein</topology>
    </subcellularLocation>
    <subcellularLocation>
        <location evidence="1">Host cell membrane</location>
        <topology evidence="1">Single-pass membrane protein</topology>
    </subcellularLocation>
</comment>
<comment type="PTM">
    <text evidence="1">The inactive precursor F0 is glycosylated and proteolytically cleaved into F1 and F2 to be functionally active. The cleavage is mediated by cellular proteases during the transport and maturation of the polypeptide (By similarity).</text>
</comment>
<comment type="similarity">
    <text evidence="3">Belongs to the paramyxoviruses fusion glycoprotein family.</text>
</comment>
<protein>
    <recommendedName>
        <fullName>Fusion glycoprotein F0</fullName>
    </recommendedName>
    <component>
        <recommendedName>
            <fullName>Fusion glycoprotein F2</fullName>
        </recommendedName>
    </component>
    <component>
        <recommendedName>
            <fullName>Fusion glycoprotein F1</fullName>
        </recommendedName>
    </component>
</protein>
<reference key="1">
    <citation type="journal article" date="1986" name="J. Gen. Virol.">
        <title>Nucleotide sequence of the gene encoding the fusion glycoprotein of Newcastle disease virus.</title>
        <authorList>
            <person name="Chambers P."/>
            <person name="Millar N.S."/>
            <person name="Emmerson P.T."/>
        </authorList>
    </citation>
    <scope>NUCLEOTIDE SEQUENCE [GENOMIC RNA]</scope>
</reference>
<reference key="2">
    <citation type="journal article" date="1989" name="Virology">
        <title>Newcastle disease virus evolution. II. Lack of gene recombination in generating virulent and avirulent strains.</title>
        <authorList>
            <person name="Toyoda T."/>
            <person name="Sakaguchi T."/>
            <person name="Hirota H."/>
            <person name="Gotoh B."/>
            <person name="Kuma K."/>
            <person name="Miyata T."/>
            <person name="Nagai Y."/>
        </authorList>
    </citation>
    <scope>NUCLEOTIDE SEQUENCE [GENOMIC RNA]</scope>
</reference>
<accession>P06156</accession>
<proteinExistence type="inferred from homology"/>
<organism>
    <name type="scientific">Newcastle disease virus (strain Beaudette C/45)</name>
    <name type="common">NDV</name>
    <dbReference type="NCBI Taxonomy" id="11178"/>
    <lineage>
        <taxon>Viruses</taxon>
        <taxon>Riboviria</taxon>
        <taxon>Orthornavirae</taxon>
        <taxon>Negarnaviricota</taxon>
        <taxon>Haploviricotina</taxon>
        <taxon>Monjiviricetes</taxon>
        <taxon>Mononegavirales</taxon>
        <taxon>Paramyxoviridae</taxon>
        <taxon>Avulavirinae</taxon>
        <taxon>Orthoavulavirus</taxon>
        <taxon>Orthoavulavirus javaense</taxon>
        <taxon>Avian paramyxovirus 1</taxon>
    </lineage>
</organism>
<evidence type="ECO:0000250" key="1"/>
<evidence type="ECO:0000255" key="2"/>
<evidence type="ECO:0000305" key="3"/>
<sequence length="553" mass="59041">MGPRPSTKNPVPMMLTVRVALVLSCICPANSIDGRPLAAAGIVVTGDKAVNIYTSSQTGSIIVKLLPNLPKDKEACAKAPLDAYNRTLTTLLTPLGDSIRRIQESVTTSGGRRQKRFIGAIIGGVALGVATAAQITAAAALIQAKQNAANILRLKESIAATNEAVHEVTDGLSQLAVAVGKMQQFVNDQFNKTAQELGCIRIAQQVGVELNLYLTELTTVFGPQITSPALNKLTIQALYNLAGGNMDYLLTKLGVGNNQLSSLIGSGLITGNPILYDSQTQLLGIQVTLPSVGNLNNMRATYLETLSVSTTRGFASALVPKVVTQVGSVIEELDTSYCIETDLDLYCTRIVTFPMSPGIYSCLSGNTSACMYSKTEGALTTPYMTIKGSVIANCKMTTCRCVNPPGIISQNYGEAVSLIDKQSCNVLSLDGITLRLSGEFDATYQKNISIQDSQVIITGNLDISTELGNVNNSISNALNKLEESNSKLDKVNVKLTSTSALITYIVLTIISLVFGILSLVLACYLMYKQKAQQKTLLWLGNNTLDQMRATTKM</sequence>
<name>FUS_NDVB</name>
<keyword id="KW-0165">Cleavage on pair of basic residues</keyword>
<keyword id="KW-0175">Coiled coil</keyword>
<keyword id="KW-1015">Disulfide bond</keyword>
<keyword id="KW-1169">Fusion of virus membrane with host cell membrane</keyword>
<keyword id="KW-1168">Fusion of virus membrane with host membrane</keyword>
<keyword id="KW-0325">Glycoprotein</keyword>
<keyword id="KW-1032">Host cell membrane</keyword>
<keyword id="KW-1043">Host membrane</keyword>
<keyword id="KW-0449">Lipoprotein</keyword>
<keyword id="KW-0472">Membrane</keyword>
<keyword id="KW-0564">Palmitate</keyword>
<keyword id="KW-0732">Signal</keyword>
<keyword id="KW-0812">Transmembrane</keyword>
<keyword id="KW-1133">Transmembrane helix</keyword>
<keyword id="KW-0261">Viral envelope protein</keyword>
<keyword id="KW-1162">Viral penetration into host cytoplasm</keyword>
<keyword id="KW-0946">Virion</keyword>
<keyword id="KW-1160">Virus entry into host cell</keyword>